<accession>O43008</accession>
<evidence type="ECO:0000269" key="1">
    <source>
    </source>
</evidence>
<evidence type="ECO:0000269" key="2">
    <source>
    </source>
</evidence>
<evidence type="ECO:0000305" key="3"/>
<comment type="function">
    <text evidence="1">Has a role in meiotic chromosome segregation.</text>
</comment>
<comment type="subcellular location">
    <subcellularLocation>
        <location evidence="2">Cytoplasm</location>
    </subcellularLocation>
    <subcellularLocation>
        <location evidence="2">Nucleus</location>
    </subcellularLocation>
</comment>
<comment type="similarity">
    <text evidence="3">Belongs to the cyclin family. Cyclin AB subfamily.</text>
</comment>
<sequence length="300" mass="34286">MLTSKHEFSLFLNTPAINSKSEKEVISEGPLTTSNEIDVTFSESFSSHLINLRRVPSVNSIIEQEKKGLTKISPSILNQNIAYKEKRQQLFSVLYEETVGYVSMDTLCIAISLLDRCFTVKPTIPTTSFKIYAIGCLFIAFKLTSDYSVAKKSFCENLAPSLSTKNLEKYEKIVLALLNFDIYVISLPSVESFLTPLIFQHVFFKSLPSESCDQMMVEWQYLLVEVMKDCQFIEYRPTEILCASFWVLLEIIWPSAFDFKPFQHLCSLPTNGSADETYIKHSNRFHDLIISIQRIADMLA</sequence>
<proteinExistence type="evidence at protein level"/>
<feature type="chain" id="PRO_0000080417" description="Meiosis-specific cyclin crs1">
    <location>
        <begin position="1"/>
        <end position="300"/>
    </location>
</feature>
<feature type="domain" description="Cyclin N-terminal">
    <location>
        <begin position="61"/>
        <end position="183"/>
    </location>
</feature>
<protein>
    <recommendedName>
        <fullName>Meiosis-specific cyclin crs1</fullName>
    </recommendedName>
    <alternativeName>
        <fullName>Cyclin-like protein regulated via splicing 1</fullName>
    </alternativeName>
    <alternativeName>
        <fullName>Meiotically up-regulated gene 17 protein</fullName>
    </alternativeName>
</protein>
<name>CRS1_SCHPO</name>
<organism>
    <name type="scientific">Schizosaccharomyces pombe (strain 972 / ATCC 24843)</name>
    <name type="common">Fission yeast</name>
    <dbReference type="NCBI Taxonomy" id="284812"/>
    <lineage>
        <taxon>Eukaryota</taxon>
        <taxon>Fungi</taxon>
        <taxon>Dikarya</taxon>
        <taxon>Ascomycota</taxon>
        <taxon>Taphrinomycotina</taxon>
        <taxon>Schizosaccharomycetes</taxon>
        <taxon>Schizosaccharomycetales</taxon>
        <taxon>Schizosaccharomycetaceae</taxon>
        <taxon>Schizosaccharomyces</taxon>
    </lineage>
</organism>
<gene>
    <name type="primary">crs1</name>
    <name type="synonym">mug17</name>
    <name type="ORF">SPBC2G2.09c</name>
</gene>
<dbReference type="EMBL" id="CU329671">
    <property type="protein sequence ID" value="CAA17889.3"/>
    <property type="molecule type" value="Genomic_DNA"/>
</dbReference>
<dbReference type="PIR" id="T40148">
    <property type="entry name" value="T40148"/>
</dbReference>
<dbReference type="RefSeq" id="NP_596438.3">
    <property type="nucleotide sequence ID" value="NM_001022357.3"/>
</dbReference>
<dbReference type="SMR" id="O43008"/>
<dbReference type="BioGRID" id="276978">
    <property type="interactions" value="7"/>
</dbReference>
<dbReference type="FunCoup" id="O43008">
    <property type="interactions" value="11"/>
</dbReference>
<dbReference type="STRING" id="284812.O43008"/>
<dbReference type="iPTMnet" id="O43008"/>
<dbReference type="PaxDb" id="4896-SPBC2G2.09c.1"/>
<dbReference type="EnsemblFungi" id="SPBC2G2.09c.1">
    <property type="protein sequence ID" value="SPBC2G2.09c.1:pep"/>
    <property type="gene ID" value="SPBC2G2.09c"/>
</dbReference>
<dbReference type="GeneID" id="2540450"/>
<dbReference type="KEGG" id="spo:2540450"/>
<dbReference type="PomBase" id="SPBC2G2.09c">
    <property type="gene designation" value="crs1"/>
</dbReference>
<dbReference type="VEuPathDB" id="FungiDB:SPBC2G2.09c"/>
<dbReference type="HOGENOM" id="CLU_080789_0_0_1"/>
<dbReference type="InParanoid" id="O43008"/>
<dbReference type="OMA" id="ITPESIW"/>
<dbReference type="Reactome" id="R-SPO-3214858">
    <property type="pathway name" value="RMTs methylate histone arginines"/>
</dbReference>
<dbReference type="Reactome" id="R-SPO-5687128">
    <property type="pathway name" value="MAPK6/MAPK4 signaling"/>
</dbReference>
<dbReference type="Reactome" id="R-SPO-5689880">
    <property type="pathway name" value="Ub-specific processing proteases"/>
</dbReference>
<dbReference type="Reactome" id="R-SPO-5693607">
    <property type="pathway name" value="Processing of DNA double-strand break ends"/>
</dbReference>
<dbReference type="Reactome" id="R-SPO-68949">
    <property type="pathway name" value="Orc1 removal from chromatin"/>
</dbReference>
<dbReference type="Reactome" id="R-SPO-69017">
    <property type="pathway name" value="CDK-mediated phosphorylation and removal of Cdc6"/>
</dbReference>
<dbReference type="Reactome" id="R-SPO-69231">
    <property type="pathway name" value="Cyclin D associated events in G1"/>
</dbReference>
<dbReference type="Reactome" id="R-SPO-69656">
    <property type="pathway name" value="Cyclin A:Cdk2-associated events at S phase entry"/>
</dbReference>
<dbReference type="Reactome" id="R-SPO-75815">
    <property type="pathway name" value="Ubiquitin-dependent degradation of Cyclin D"/>
</dbReference>
<dbReference type="Reactome" id="R-SPO-8951664">
    <property type="pathway name" value="Neddylation"/>
</dbReference>
<dbReference type="Reactome" id="R-SPO-9754119">
    <property type="pathway name" value="Drug-mediated inhibition of CDK4/CDK6 activity"/>
</dbReference>
<dbReference type="Reactome" id="R-SPO-983168">
    <property type="pathway name" value="Antigen processing: Ubiquitination &amp; Proteasome degradation"/>
</dbReference>
<dbReference type="PRO" id="PR:O43008"/>
<dbReference type="Proteomes" id="UP000002485">
    <property type="component" value="Chromosome II"/>
</dbReference>
<dbReference type="GO" id="GO:0000307">
    <property type="term" value="C:cyclin-dependent protein kinase holoenzyme complex"/>
    <property type="evidence" value="ECO:0000318"/>
    <property type="project" value="GO_Central"/>
</dbReference>
<dbReference type="GO" id="GO:0005737">
    <property type="term" value="C:cytoplasm"/>
    <property type="evidence" value="ECO:0000318"/>
    <property type="project" value="GO_Central"/>
</dbReference>
<dbReference type="GO" id="GO:0005829">
    <property type="term" value="C:cytosol"/>
    <property type="evidence" value="ECO:0007005"/>
    <property type="project" value="PomBase"/>
</dbReference>
<dbReference type="GO" id="GO:0035974">
    <property type="term" value="C:meiotic spindle pole body"/>
    <property type="evidence" value="ECO:0000314"/>
    <property type="project" value="PomBase"/>
</dbReference>
<dbReference type="GO" id="GO:0005815">
    <property type="term" value="C:microtubule organizing center"/>
    <property type="evidence" value="ECO:0000318"/>
    <property type="project" value="GO_Central"/>
</dbReference>
<dbReference type="GO" id="GO:0005654">
    <property type="term" value="C:nucleoplasm"/>
    <property type="evidence" value="ECO:0000269"/>
    <property type="project" value="PomBase"/>
</dbReference>
<dbReference type="GO" id="GO:0005634">
    <property type="term" value="C:nucleus"/>
    <property type="evidence" value="ECO:0007005"/>
    <property type="project" value="PomBase"/>
</dbReference>
<dbReference type="GO" id="GO:0016538">
    <property type="term" value="F:cyclin-dependent protein serine/threonine kinase regulator activity"/>
    <property type="evidence" value="ECO:0000269"/>
    <property type="project" value="PomBase"/>
</dbReference>
<dbReference type="GO" id="GO:0051301">
    <property type="term" value="P:cell division"/>
    <property type="evidence" value="ECO:0007669"/>
    <property type="project" value="UniProtKB-KW"/>
</dbReference>
<dbReference type="GO" id="GO:0007059">
    <property type="term" value="P:chromosome segregation"/>
    <property type="evidence" value="ECO:0007669"/>
    <property type="project" value="UniProtKB-KW"/>
</dbReference>
<dbReference type="GO" id="GO:0000082">
    <property type="term" value="P:G1/S transition of mitotic cell cycle"/>
    <property type="evidence" value="ECO:0000318"/>
    <property type="project" value="GO_Central"/>
</dbReference>
<dbReference type="GO" id="GO:1905263">
    <property type="term" value="P:positive regulation of meiotic DNA double-strand break formation involved in reciprocal meiotic recombination"/>
    <property type="evidence" value="ECO:0000315"/>
    <property type="project" value="PomBase"/>
</dbReference>
<dbReference type="GO" id="GO:1901993">
    <property type="term" value="P:regulation of meiotic cell cycle phase transition"/>
    <property type="evidence" value="ECO:0000303"/>
    <property type="project" value="PomBase"/>
</dbReference>
<dbReference type="GO" id="GO:0023052">
    <property type="term" value="P:signaling"/>
    <property type="evidence" value="ECO:0000303"/>
    <property type="project" value="PomBase"/>
</dbReference>
<dbReference type="Gene3D" id="1.10.472.10">
    <property type="entry name" value="Cyclin-like"/>
    <property type="match status" value="1"/>
</dbReference>
<dbReference type="InterPro" id="IPR013763">
    <property type="entry name" value="Cyclin-like_dom"/>
</dbReference>
<dbReference type="InterPro" id="IPR036915">
    <property type="entry name" value="Cyclin-like_sf"/>
</dbReference>
<dbReference type="InterPro" id="IPR006671">
    <property type="entry name" value="Cyclin_N"/>
</dbReference>
<dbReference type="Pfam" id="PF00134">
    <property type="entry name" value="Cyclin_N"/>
    <property type="match status" value="1"/>
</dbReference>
<dbReference type="SMART" id="SM00385">
    <property type="entry name" value="CYCLIN"/>
    <property type="match status" value="1"/>
</dbReference>
<dbReference type="SUPFAM" id="SSF47954">
    <property type="entry name" value="Cyclin-like"/>
    <property type="match status" value="1"/>
</dbReference>
<keyword id="KW-0131">Cell cycle</keyword>
<keyword id="KW-0132">Cell division</keyword>
<keyword id="KW-0159">Chromosome partition</keyword>
<keyword id="KW-0195">Cyclin</keyword>
<keyword id="KW-0963">Cytoplasm</keyword>
<keyword id="KW-0469">Meiosis</keyword>
<keyword id="KW-0539">Nucleus</keyword>
<keyword id="KW-1185">Reference proteome</keyword>
<reference key="1">
    <citation type="journal article" date="2002" name="Nature">
        <title>The genome sequence of Schizosaccharomyces pombe.</title>
        <authorList>
            <person name="Wood V."/>
            <person name="Gwilliam R."/>
            <person name="Rajandream M.A."/>
            <person name="Lyne M.H."/>
            <person name="Lyne R."/>
            <person name="Stewart A."/>
            <person name="Sgouros J.G."/>
            <person name="Peat N."/>
            <person name="Hayles J."/>
            <person name="Baker S.G."/>
            <person name="Basham D."/>
            <person name="Bowman S."/>
            <person name="Brooks K."/>
            <person name="Brown D."/>
            <person name="Brown S."/>
            <person name="Chillingworth T."/>
            <person name="Churcher C.M."/>
            <person name="Collins M."/>
            <person name="Connor R."/>
            <person name="Cronin A."/>
            <person name="Davis P."/>
            <person name="Feltwell T."/>
            <person name="Fraser A."/>
            <person name="Gentles S."/>
            <person name="Goble A."/>
            <person name="Hamlin N."/>
            <person name="Harris D.E."/>
            <person name="Hidalgo J."/>
            <person name="Hodgson G."/>
            <person name="Holroyd S."/>
            <person name="Hornsby T."/>
            <person name="Howarth S."/>
            <person name="Huckle E.J."/>
            <person name="Hunt S."/>
            <person name="Jagels K."/>
            <person name="James K.D."/>
            <person name="Jones L."/>
            <person name="Jones M."/>
            <person name="Leather S."/>
            <person name="McDonald S."/>
            <person name="McLean J."/>
            <person name="Mooney P."/>
            <person name="Moule S."/>
            <person name="Mungall K.L."/>
            <person name="Murphy L.D."/>
            <person name="Niblett D."/>
            <person name="Odell C."/>
            <person name="Oliver K."/>
            <person name="O'Neil S."/>
            <person name="Pearson D."/>
            <person name="Quail M.A."/>
            <person name="Rabbinowitsch E."/>
            <person name="Rutherford K.M."/>
            <person name="Rutter S."/>
            <person name="Saunders D."/>
            <person name="Seeger K."/>
            <person name="Sharp S."/>
            <person name="Skelton J."/>
            <person name="Simmonds M.N."/>
            <person name="Squares R."/>
            <person name="Squares S."/>
            <person name="Stevens K."/>
            <person name="Taylor K."/>
            <person name="Taylor R.G."/>
            <person name="Tivey A."/>
            <person name="Walsh S.V."/>
            <person name="Warren T."/>
            <person name="Whitehead S."/>
            <person name="Woodward J.R."/>
            <person name="Volckaert G."/>
            <person name="Aert R."/>
            <person name="Robben J."/>
            <person name="Grymonprez B."/>
            <person name="Weltjens I."/>
            <person name="Vanstreels E."/>
            <person name="Rieger M."/>
            <person name="Schaefer M."/>
            <person name="Mueller-Auer S."/>
            <person name="Gabel C."/>
            <person name="Fuchs M."/>
            <person name="Duesterhoeft A."/>
            <person name="Fritzc C."/>
            <person name="Holzer E."/>
            <person name="Moestl D."/>
            <person name="Hilbert H."/>
            <person name="Borzym K."/>
            <person name="Langer I."/>
            <person name="Beck A."/>
            <person name="Lehrach H."/>
            <person name="Reinhardt R."/>
            <person name="Pohl T.M."/>
            <person name="Eger P."/>
            <person name="Zimmermann W."/>
            <person name="Wedler H."/>
            <person name="Wambutt R."/>
            <person name="Purnelle B."/>
            <person name="Goffeau A."/>
            <person name="Cadieu E."/>
            <person name="Dreano S."/>
            <person name="Gloux S."/>
            <person name="Lelaure V."/>
            <person name="Mottier S."/>
            <person name="Galibert F."/>
            <person name="Aves S.J."/>
            <person name="Xiang Z."/>
            <person name="Hunt C."/>
            <person name="Moore K."/>
            <person name="Hurst S.M."/>
            <person name="Lucas M."/>
            <person name="Rochet M."/>
            <person name="Gaillardin C."/>
            <person name="Tallada V.A."/>
            <person name="Garzon A."/>
            <person name="Thode G."/>
            <person name="Daga R.R."/>
            <person name="Cruzado L."/>
            <person name="Jimenez J."/>
            <person name="Sanchez M."/>
            <person name="del Rey F."/>
            <person name="Benito J."/>
            <person name="Dominguez A."/>
            <person name="Revuelta J.L."/>
            <person name="Moreno S."/>
            <person name="Armstrong J."/>
            <person name="Forsburg S.L."/>
            <person name="Cerutti L."/>
            <person name="Lowe T."/>
            <person name="McCombie W.R."/>
            <person name="Paulsen I."/>
            <person name="Potashkin J."/>
            <person name="Shpakovski G.V."/>
            <person name="Ussery D."/>
            <person name="Barrell B.G."/>
            <person name="Nurse P."/>
        </authorList>
    </citation>
    <scope>NUCLEOTIDE SEQUENCE [LARGE SCALE GENOMIC DNA]</scope>
    <source>
        <strain>972 / ATCC 24843</strain>
    </source>
</reference>
<reference key="2">
    <citation type="journal article" date="2005" name="Curr. Biol.">
        <title>A large-scale screen in S. pombe identifies seven novel genes required for critical meiotic events.</title>
        <authorList>
            <person name="Martin-Castellanos C."/>
            <person name="Blanco M."/>
            <person name="Rozalen A.E."/>
            <person name="Perez-Hidalgo L."/>
            <person name="Garcia A.I."/>
            <person name="Conde F."/>
            <person name="Mata J."/>
            <person name="Ellermeier C."/>
            <person name="Davis L."/>
            <person name="San-Segundo P."/>
            <person name="Smith G.R."/>
            <person name="Moreno S."/>
        </authorList>
    </citation>
    <scope>FUNCTION IN MEIOSIS</scope>
</reference>
<reference key="3">
    <citation type="journal article" date="2005" name="Mol. Cell">
        <title>Negative control contributes to an extensive program of meiotic splicing in fission yeast.</title>
        <authorList>
            <person name="Averbeck N."/>
            <person name="Sunder S."/>
            <person name="Sample N."/>
            <person name="Wise J.A."/>
            <person name="Leatherwood J."/>
        </authorList>
    </citation>
    <scope>REVISION OF GENE MODEL</scope>
</reference>
<reference key="4">
    <citation type="journal article" date="2006" name="Nat. Biotechnol.">
        <title>ORFeome cloning and global analysis of protein localization in the fission yeast Schizosaccharomyces pombe.</title>
        <authorList>
            <person name="Matsuyama A."/>
            <person name="Arai R."/>
            <person name="Yashiroda Y."/>
            <person name="Shirai A."/>
            <person name="Kamata A."/>
            <person name="Sekido S."/>
            <person name="Kobayashi Y."/>
            <person name="Hashimoto A."/>
            <person name="Hamamoto M."/>
            <person name="Hiraoka Y."/>
            <person name="Horinouchi S."/>
            <person name="Yoshida M."/>
        </authorList>
    </citation>
    <scope>SUBCELLULAR LOCATION [LARGE SCALE ANALYSIS]</scope>
</reference>